<dbReference type="EC" id="7.4.2.8" evidence="1"/>
<dbReference type="EMBL" id="AY028382">
    <property type="protein sequence ID" value="AAK17003.1"/>
    <property type="molecule type" value="Genomic_DNA"/>
</dbReference>
<dbReference type="RefSeq" id="WP_008808430.1">
    <property type="nucleotide sequence ID" value="NZ_RJVY01000001.1"/>
</dbReference>
<dbReference type="SMR" id="Q9AET4"/>
<dbReference type="OrthoDB" id="9805579at2"/>
<dbReference type="BRENDA" id="7.4.2.5">
    <property type="organism ID" value="5934"/>
</dbReference>
<dbReference type="GO" id="GO:0031522">
    <property type="term" value="C:cell envelope Sec protein transport complex"/>
    <property type="evidence" value="ECO:0007669"/>
    <property type="project" value="TreeGrafter"/>
</dbReference>
<dbReference type="GO" id="GO:0005829">
    <property type="term" value="C:cytosol"/>
    <property type="evidence" value="ECO:0007669"/>
    <property type="project" value="TreeGrafter"/>
</dbReference>
<dbReference type="GO" id="GO:0005886">
    <property type="term" value="C:plasma membrane"/>
    <property type="evidence" value="ECO:0007669"/>
    <property type="project" value="UniProtKB-SubCell"/>
</dbReference>
<dbReference type="GO" id="GO:0005524">
    <property type="term" value="F:ATP binding"/>
    <property type="evidence" value="ECO:0007669"/>
    <property type="project" value="UniProtKB-UniRule"/>
</dbReference>
<dbReference type="GO" id="GO:0046872">
    <property type="term" value="F:metal ion binding"/>
    <property type="evidence" value="ECO:0007669"/>
    <property type="project" value="UniProtKB-KW"/>
</dbReference>
<dbReference type="GO" id="GO:0008564">
    <property type="term" value="F:protein-exporting ATPase activity"/>
    <property type="evidence" value="ECO:0007669"/>
    <property type="project" value="UniProtKB-EC"/>
</dbReference>
<dbReference type="GO" id="GO:0065002">
    <property type="term" value="P:intracellular protein transmembrane transport"/>
    <property type="evidence" value="ECO:0007669"/>
    <property type="project" value="UniProtKB-UniRule"/>
</dbReference>
<dbReference type="GO" id="GO:0017038">
    <property type="term" value="P:protein import"/>
    <property type="evidence" value="ECO:0007669"/>
    <property type="project" value="InterPro"/>
</dbReference>
<dbReference type="GO" id="GO:0006605">
    <property type="term" value="P:protein targeting"/>
    <property type="evidence" value="ECO:0007669"/>
    <property type="project" value="UniProtKB-UniRule"/>
</dbReference>
<dbReference type="GO" id="GO:0043952">
    <property type="term" value="P:protein transport by the Sec complex"/>
    <property type="evidence" value="ECO:0007669"/>
    <property type="project" value="TreeGrafter"/>
</dbReference>
<dbReference type="CDD" id="cd17928">
    <property type="entry name" value="DEXDc_SecA"/>
    <property type="match status" value="1"/>
</dbReference>
<dbReference type="CDD" id="cd18803">
    <property type="entry name" value="SF2_C_secA"/>
    <property type="match status" value="1"/>
</dbReference>
<dbReference type="FunFam" id="1.10.3060.10:FF:000002">
    <property type="entry name" value="Preprotein translocase subunit SecA"/>
    <property type="match status" value="1"/>
</dbReference>
<dbReference type="FunFam" id="3.40.50.300:FF:000429">
    <property type="entry name" value="Preprotein translocase subunit SecA"/>
    <property type="match status" value="1"/>
</dbReference>
<dbReference type="FunFam" id="3.90.1440.10:FF:000001">
    <property type="entry name" value="Preprotein translocase subunit SecA"/>
    <property type="match status" value="1"/>
</dbReference>
<dbReference type="Gene3D" id="1.10.3060.10">
    <property type="entry name" value="Helical scaffold and wing domains of SecA"/>
    <property type="match status" value="1"/>
</dbReference>
<dbReference type="Gene3D" id="3.40.50.300">
    <property type="entry name" value="P-loop containing nucleotide triphosphate hydrolases"/>
    <property type="match status" value="2"/>
</dbReference>
<dbReference type="Gene3D" id="3.90.1440.10">
    <property type="entry name" value="SecA, preprotein cross-linking domain"/>
    <property type="match status" value="1"/>
</dbReference>
<dbReference type="HAMAP" id="MF_01382">
    <property type="entry name" value="SecA"/>
    <property type="match status" value="1"/>
</dbReference>
<dbReference type="InterPro" id="IPR014001">
    <property type="entry name" value="Helicase_ATP-bd"/>
</dbReference>
<dbReference type="InterPro" id="IPR001650">
    <property type="entry name" value="Helicase_C-like"/>
</dbReference>
<dbReference type="InterPro" id="IPR027417">
    <property type="entry name" value="P-loop_NTPase"/>
</dbReference>
<dbReference type="InterPro" id="IPR004027">
    <property type="entry name" value="SEC_C_motif"/>
</dbReference>
<dbReference type="InterPro" id="IPR000185">
    <property type="entry name" value="SecA"/>
</dbReference>
<dbReference type="InterPro" id="IPR020937">
    <property type="entry name" value="SecA_CS"/>
</dbReference>
<dbReference type="InterPro" id="IPR011115">
    <property type="entry name" value="SecA_DEAD"/>
</dbReference>
<dbReference type="InterPro" id="IPR014018">
    <property type="entry name" value="SecA_motor_DEAD"/>
</dbReference>
<dbReference type="InterPro" id="IPR011130">
    <property type="entry name" value="SecA_preprotein_X-link_dom"/>
</dbReference>
<dbReference type="InterPro" id="IPR044722">
    <property type="entry name" value="SecA_SF2_C"/>
</dbReference>
<dbReference type="InterPro" id="IPR011116">
    <property type="entry name" value="SecA_Wing/Scaffold"/>
</dbReference>
<dbReference type="InterPro" id="IPR036266">
    <property type="entry name" value="SecA_Wing/Scaffold_sf"/>
</dbReference>
<dbReference type="InterPro" id="IPR036670">
    <property type="entry name" value="SecA_X-link_sf"/>
</dbReference>
<dbReference type="NCBIfam" id="NF006630">
    <property type="entry name" value="PRK09200.1"/>
    <property type="match status" value="1"/>
</dbReference>
<dbReference type="NCBIfam" id="TIGR00963">
    <property type="entry name" value="secA"/>
    <property type="match status" value="1"/>
</dbReference>
<dbReference type="PANTHER" id="PTHR30612:SF0">
    <property type="entry name" value="CHLOROPLAST PROTEIN-TRANSPORTING ATPASE"/>
    <property type="match status" value="1"/>
</dbReference>
<dbReference type="PANTHER" id="PTHR30612">
    <property type="entry name" value="SECA INNER MEMBRANE COMPONENT OF SEC PROTEIN SECRETION SYSTEM"/>
    <property type="match status" value="1"/>
</dbReference>
<dbReference type="Pfam" id="PF21090">
    <property type="entry name" value="P-loop_SecA"/>
    <property type="match status" value="2"/>
</dbReference>
<dbReference type="Pfam" id="PF02810">
    <property type="entry name" value="SEC-C"/>
    <property type="match status" value="1"/>
</dbReference>
<dbReference type="Pfam" id="PF07517">
    <property type="entry name" value="SecA_DEAD"/>
    <property type="match status" value="1"/>
</dbReference>
<dbReference type="Pfam" id="PF01043">
    <property type="entry name" value="SecA_PP_bind"/>
    <property type="match status" value="1"/>
</dbReference>
<dbReference type="Pfam" id="PF07516">
    <property type="entry name" value="SecA_SW"/>
    <property type="match status" value="1"/>
</dbReference>
<dbReference type="PRINTS" id="PR00906">
    <property type="entry name" value="SECA"/>
</dbReference>
<dbReference type="SMART" id="SM00957">
    <property type="entry name" value="SecA_DEAD"/>
    <property type="match status" value="1"/>
</dbReference>
<dbReference type="SMART" id="SM00958">
    <property type="entry name" value="SecA_PP_bind"/>
    <property type="match status" value="1"/>
</dbReference>
<dbReference type="SUPFAM" id="SSF81886">
    <property type="entry name" value="Helical scaffold and wing domains of SecA"/>
    <property type="match status" value="1"/>
</dbReference>
<dbReference type="SUPFAM" id="SSF52540">
    <property type="entry name" value="P-loop containing nucleoside triphosphate hydrolases"/>
    <property type="match status" value="2"/>
</dbReference>
<dbReference type="SUPFAM" id="SSF81767">
    <property type="entry name" value="Pre-protein crosslinking domain of SecA"/>
    <property type="match status" value="1"/>
</dbReference>
<dbReference type="PROSITE" id="PS01312">
    <property type="entry name" value="SECA"/>
    <property type="match status" value="1"/>
</dbReference>
<dbReference type="PROSITE" id="PS51196">
    <property type="entry name" value="SECA_MOTOR_DEAD"/>
    <property type="match status" value="1"/>
</dbReference>
<comment type="function">
    <text evidence="1">Part of the Sec protein translocase complex. Interacts with the SecYEG preprotein conducting channel. Has a central role in coupling the hydrolysis of ATP to the transfer of proteins into and across the cell membrane, serving as an ATP-driven molecular motor driving the stepwise translocation of polypeptide chains across the membrane.</text>
</comment>
<comment type="catalytic activity">
    <reaction evidence="1">
        <text>ATP + H2O + cellular proteinSide 1 = ADP + phosphate + cellular proteinSide 2.</text>
        <dbReference type="EC" id="7.4.2.8"/>
    </reaction>
</comment>
<comment type="cofactor">
    <cofactor evidence="1">
        <name>Zn(2+)</name>
        <dbReference type="ChEBI" id="CHEBI:29105"/>
    </cofactor>
    <text evidence="1">May bind 1 zinc ion per subunit.</text>
</comment>
<comment type="subunit">
    <text evidence="1">Monomer and homodimer. Part of the essential Sec protein translocation apparatus which comprises SecA, SecYEG and auxiliary proteins SecDF. Other proteins may also be involved.</text>
</comment>
<comment type="subcellular location">
    <subcellularLocation>
        <location evidence="1">Cell membrane</location>
        <topology evidence="1">Peripheral membrane protein</topology>
        <orientation evidence="1">Cytoplasmic side</orientation>
    </subcellularLocation>
    <subcellularLocation>
        <location evidence="1">Cytoplasm</location>
    </subcellularLocation>
    <text evidence="1">Distribution is 50-50.</text>
</comment>
<comment type="disruption phenotype">
    <text evidence="2">Essential.</text>
</comment>
<comment type="similarity">
    <text evidence="1 3">Belongs to the SecA family.</text>
</comment>
<reference key="1">
    <citation type="journal article" date="2002" name="Mol. Microbiol.">
        <title>An accessory sec locus of Streptococcus gordonii is required for export of the surface protein GspB and for normal levels of binding to human platelets.</title>
        <authorList>
            <person name="Bensing B.A."/>
            <person name="Sullam P.M."/>
        </authorList>
    </citation>
    <scope>NUCLEOTIDE SEQUENCE [GENOMIC DNA]</scope>
    <scope>DISRUPTION PHENOTYPE</scope>
    <source>
        <strain>M99</strain>
    </source>
</reference>
<protein>
    <recommendedName>
        <fullName evidence="1">Protein translocase subunit SecA 1</fullName>
        <ecNumber evidence="1">7.4.2.8</ecNumber>
    </recommendedName>
</protein>
<evidence type="ECO:0000255" key="1">
    <source>
        <dbReference type="HAMAP-Rule" id="MF_01382"/>
    </source>
</evidence>
<evidence type="ECO:0000269" key="2">
    <source>
    </source>
</evidence>
<evidence type="ECO:0000305" key="3"/>
<gene>
    <name evidence="1" type="primary">secA1</name>
    <name type="synonym">secA</name>
</gene>
<feature type="chain" id="PRO_0000414186" description="Protein translocase subunit SecA 1">
    <location>
        <begin position="1"/>
        <end position="838"/>
    </location>
</feature>
<feature type="binding site" evidence="1">
    <location>
        <position position="85"/>
    </location>
    <ligand>
        <name>ATP</name>
        <dbReference type="ChEBI" id="CHEBI:30616"/>
    </ligand>
</feature>
<feature type="binding site" evidence="1">
    <location>
        <begin position="103"/>
        <end position="107"/>
    </location>
    <ligand>
        <name>ATP</name>
        <dbReference type="ChEBI" id="CHEBI:30616"/>
    </ligand>
</feature>
<feature type="binding site" evidence="1">
    <location>
        <position position="493"/>
    </location>
    <ligand>
        <name>ATP</name>
        <dbReference type="ChEBI" id="CHEBI:30616"/>
    </ligand>
</feature>
<feature type="binding site" evidence="1">
    <location>
        <position position="823"/>
    </location>
    <ligand>
        <name>Zn(2+)</name>
        <dbReference type="ChEBI" id="CHEBI:29105"/>
    </ligand>
</feature>
<feature type="binding site" evidence="1">
    <location>
        <position position="825"/>
    </location>
    <ligand>
        <name>Zn(2+)</name>
        <dbReference type="ChEBI" id="CHEBI:29105"/>
    </ligand>
</feature>
<feature type="binding site" evidence="1">
    <location>
        <position position="834"/>
    </location>
    <ligand>
        <name>Zn(2+)</name>
        <dbReference type="ChEBI" id="CHEBI:29105"/>
    </ligand>
</feature>
<feature type="binding site" evidence="1">
    <location>
        <position position="835"/>
    </location>
    <ligand>
        <name>Zn(2+)</name>
        <dbReference type="ChEBI" id="CHEBI:29105"/>
    </ligand>
</feature>
<sequence length="838" mass="94967">MANILRTIIENDKGELRKLEKMANKVIAYSDQMAALSDEELKAKTDEFKQRYQNGESLDDLLYEAFAVVREGAKRVLGLYPYPVQIMGGIVLHHGDVPEMRTGEGKTLTATMPVYLNALAGEGVHVVTVNEYLTERDATEMGELYSWLGLSVGINLAAKSPAEKREAYACDITYSTNSEIGFDYLRDNMVVRAENMVQRPLNYALVDEVDSILIDEARTPLIVSGPVSSETNQLYHMADSFVKSLNKDDYIIDVPSKTIGLSDSGIDKAESYFKLDNLYDIENVALTHFIDNALRANYIMILDIDYVVSEEQEILIVDQFTGRTMEGRRYSDGLHQAIEAKEGVPVQDETKTSASITYQNLFRMYKKLSGMTGTAKTEEEEFRETYNIRVIPIPTNRPIARIDHEDLLYPSLESKFKAVVEDVKERHLKGQPVLVGTVAVETSDYLSKKLVAAGIPHEVLNAKNHYREAQIIMNAGQRGAVTIATNMAGRGTDIKLGEGVRELGGLCVIGTERHESRRIDNQLRGRSGRQGDPGESQFYLSLEDELMRRFGSERIKAVLDRFKLSEEESVIKSKMFTRQVEAAQKRVEGNNYDTRKQVLQYDDVMREQREIIYAERHDVITANRDLAPEIHAMIKRTIDRFVDGNSRAPQEEKLDSILYFAKYNLVPEESISLSDLQGLSDEEIKANLYERALEVYNSQIAKLRDEEAVREFQKVLILRVVDNKWTDHIDALDQLRNAVGLRGYAQNNPVVEYQSESFRMFNDMIGSIEFDVTRLMMKAQIHEQERPRTEHNIVTTATRNISAQESDLPADVDLAKVGRNELCPCGSGKKFKNCHGRR</sequence>
<keyword id="KW-0067">ATP-binding</keyword>
<keyword id="KW-1003">Cell membrane</keyword>
<keyword id="KW-0963">Cytoplasm</keyword>
<keyword id="KW-0472">Membrane</keyword>
<keyword id="KW-0479">Metal-binding</keyword>
<keyword id="KW-0547">Nucleotide-binding</keyword>
<keyword id="KW-0653">Protein transport</keyword>
<keyword id="KW-1278">Translocase</keyword>
<keyword id="KW-0811">Translocation</keyword>
<keyword id="KW-0813">Transport</keyword>
<keyword id="KW-0862">Zinc</keyword>
<name>SECA1_STRGN</name>
<proteinExistence type="inferred from homology"/>
<accession>Q9AET4</accession>
<organism>
    <name type="scientific">Streptococcus gordonii</name>
    <dbReference type="NCBI Taxonomy" id="1302"/>
    <lineage>
        <taxon>Bacteria</taxon>
        <taxon>Bacillati</taxon>
        <taxon>Bacillota</taxon>
        <taxon>Bacilli</taxon>
        <taxon>Lactobacillales</taxon>
        <taxon>Streptococcaceae</taxon>
        <taxon>Streptococcus</taxon>
    </lineage>
</organism>